<organism>
    <name type="scientific">Ampulloclitocybe clavipes</name>
    <name type="common">Club foot</name>
    <name type="synonym">Clitocybe clavipes</name>
    <dbReference type="NCBI Taxonomy" id="56467"/>
    <lineage>
        <taxon>Eukaryota</taxon>
        <taxon>Fungi</taxon>
        <taxon>Dikarya</taxon>
        <taxon>Basidiomycota</taxon>
        <taxon>Agaricomycotina</taxon>
        <taxon>Agaricomycetes</taxon>
        <taxon>Agaricomycetidae</taxon>
        <taxon>Agaricales</taxon>
        <taxon>Hygrophoraceae</taxon>
        <taxon>Ampulloclitocybe</taxon>
    </lineage>
</organism>
<comment type="function">
    <text evidence="3">Cytochrome P450 monooxygenase; part of the gene cluster that mediates the biosynthesis of clavilactone A, a meroterpenoid that features a unique benzo-fused ten-membered carbocyclic ring unit with an alpha,beta-epoxy-gamma-lactone moiety, forming an intriguing 10/5/3 tricyclic nested skeleton (PubMed:38602511). Cytochrome P450 monooxygenases claO, claP, claQ, claU, and claW are close orthologs, suggesting that a redundant function or pseudogenes are present in the cla cluster. These monoxygenases are not involved in clavilactone A biosynthesis nor its modification (PubMed:38602511). ClaR, ClaS and ClaT are sufficient to produce clavilactone A. The biosynthesis begins with the prenyltransferase claS that transfers geranyl pyrophosphate (GPP) to hydroquinone to produces geranylhydroquinone. The cytochrome P450 monooxygenase claR then catalyzes the diradical coupling reaction between the intramolecular hydroquinone and allyl moieties to form the benzo-fused ten-membered carbocyclic ring unit of wigantol. Finally the cytochrome P450 monooxygenase claT exquisitely and stereoselectively assembles the alpha,beta-epoxy-gamma-lactone moiety, producing clavilactone A via arnebinol A (PubMed:38602511).</text>
</comment>
<comment type="cofactor">
    <cofactor evidence="1">
        <name>heme</name>
        <dbReference type="ChEBI" id="CHEBI:30413"/>
    </cofactor>
</comment>
<comment type="pathway">
    <text evidence="6">Secondary metabolite biosynthesis; terpenoid biosynthesis.</text>
</comment>
<comment type="subcellular location">
    <subcellularLocation>
        <location evidence="2">Membrane</location>
        <topology evidence="2">Single-pass membrane protein</topology>
    </subcellularLocation>
</comment>
<comment type="similarity">
    <text evidence="5">Belongs to the cytochrome P450 family.</text>
</comment>
<sequence length="541" mass="60529">MAIMPYIRQGTVINALVILFSFWAFLSLIRVIRRRSSTTPLKGPPSESFIFGLRQIIHKSEDSDALYEQWADKYGSVYQVSEPMGSKRVVLCDPKAILHLYSKDTFDFVQTEINRLFLGKYFGRGILWAEGESHRRQRKALTPAFSNVAIRNITPVFFDSAYKTKAAWDATFESNPTKERIIIEVQTWMNHISLDSIGIAGFSHDFGSIQGKPSAVLDVFDSFSNVQPDATTTLMFTLAATFPIMLNIPNNRNALFTKLHQTILEISDELLESTRKEEEGKAGGGRGDAKSIIGSLIKAESANSHLRISQEEVIAQMNVLLLAGYETTSVSLTWALIELSRHPDVQQKLRDELSRFAATDPTWEELTNGLPYLDAVVHEILRLHAPLDETIRVAANDDVIPLGTPLQTASGNIVDRISIGKGTTVSIPTRCMNRLTGLWGDNAKEFVPDRWLNDEKDLLKANEIQGYRHLLTFIDGPRTCLGKGFAIAEFKAVLSVLIRHYTFEFPDGPETKVVGHRSIMERPKVAGQDGAKVPLLVRRVE</sequence>
<proteinExistence type="inferred from homology"/>
<keyword id="KW-0349">Heme</keyword>
<keyword id="KW-0408">Iron</keyword>
<keyword id="KW-0472">Membrane</keyword>
<keyword id="KW-0479">Metal-binding</keyword>
<keyword id="KW-0503">Monooxygenase</keyword>
<keyword id="KW-0560">Oxidoreductase</keyword>
<keyword id="KW-0812">Transmembrane</keyword>
<keyword id="KW-1133">Transmembrane helix</keyword>
<feature type="chain" id="PRO_0000461439" description="Cytochrome P450 monooxygenase claW">
    <location>
        <begin position="1"/>
        <end position="541"/>
    </location>
</feature>
<feature type="transmembrane region" description="Helical" evidence="2">
    <location>
        <begin position="12"/>
        <end position="32"/>
    </location>
</feature>
<feature type="binding site" description="axial binding residue" evidence="1">
    <location>
        <position position="480"/>
    </location>
    <ligand>
        <name>heme</name>
        <dbReference type="ChEBI" id="CHEBI:30413"/>
    </ligand>
    <ligandPart>
        <name>Fe</name>
        <dbReference type="ChEBI" id="CHEBI:18248"/>
    </ligandPart>
</feature>
<reference key="1">
    <citation type="journal article" date="2024" name="J. Am. Chem. Soc.">
        <title>Two cytochrome P450 enzymes form the tricyclic nested skeleton of meroterpenoids by sequential oxidative reactions.</title>
        <authorList>
            <person name="Yang E."/>
            <person name="Yao Y."/>
            <person name="Su H."/>
            <person name="Sun Z."/>
            <person name="Gao S.S."/>
            <person name="Sureram S."/>
            <person name="Kittakoop P."/>
            <person name="Fan K."/>
            <person name="Pan Y."/>
            <person name="Xu X."/>
            <person name="Sun Z.H."/>
            <person name="Ma G."/>
            <person name="Liu G."/>
        </authorList>
    </citation>
    <scope>NUCLEOTIDE SEQUENCE [GENOMIC DNA]</scope>
    <scope>FUNCTION</scope>
    <scope>PATHWAY</scope>
</reference>
<gene>
    <name evidence="4" type="primary">claW</name>
</gene>
<name>CLAW_AMPCV</name>
<dbReference type="EC" id="1.-.-.-" evidence="6"/>
<dbReference type="EMBL" id="PP505398">
    <property type="protein sequence ID" value="WYC13326.1"/>
    <property type="molecule type" value="Genomic_DNA"/>
</dbReference>
<dbReference type="SMR" id="P9WEI2"/>
<dbReference type="UniPathway" id="UPA00213"/>
<dbReference type="GO" id="GO:0016020">
    <property type="term" value="C:membrane"/>
    <property type="evidence" value="ECO:0007669"/>
    <property type="project" value="UniProtKB-SubCell"/>
</dbReference>
<dbReference type="GO" id="GO:0020037">
    <property type="term" value="F:heme binding"/>
    <property type="evidence" value="ECO:0007669"/>
    <property type="project" value="InterPro"/>
</dbReference>
<dbReference type="GO" id="GO:0005506">
    <property type="term" value="F:iron ion binding"/>
    <property type="evidence" value="ECO:0007669"/>
    <property type="project" value="InterPro"/>
</dbReference>
<dbReference type="GO" id="GO:0004497">
    <property type="term" value="F:monooxygenase activity"/>
    <property type="evidence" value="ECO:0007669"/>
    <property type="project" value="UniProtKB-KW"/>
</dbReference>
<dbReference type="GO" id="GO:0016705">
    <property type="term" value="F:oxidoreductase activity, acting on paired donors, with incorporation or reduction of molecular oxygen"/>
    <property type="evidence" value="ECO:0007669"/>
    <property type="project" value="InterPro"/>
</dbReference>
<dbReference type="Gene3D" id="1.10.630.10">
    <property type="entry name" value="Cytochrome P450"/>
    <property type="match status" value="1"/>
</dbReference>
<dbReference type="InterPro" id="IPR001128">
    <property type="entry name" value="Cyt_P450"/>
</dbReference>
<dbReference type="InterPro" id="IPR002401">
    <property type="entry name" value="Cyt_P450_E_grp-I"/>
</dbReference>
<dbReference type="InterPro" id="IPR036396">
    <property type="entry name" value="Cyt_P450_sf"/>
</dbReference>
<dbReference type="InterPro" id="IPR050121">
    <property type="entry name" value="Cytochrome_P450_monoxygenase"/>
</dbReference>
<dbReference type="PANTHER" id="PTHR24305">
    <property type="entry name" value="CYTOCHROME P450"/>
    <property type="match status" value="1"/>
</dbReference>
<dbReference type="PANTHER" id="PTHR24305:SF166">
    <property type="entry name" value="CYTOCHROME P450 12A4, MITOCHONDRIAL-RELATED"/>
    <property type="match status" value="1"/>
</dbReference>
<dbReference type="Pfam" id="PF00067">
    <property type="entry name" value="p450"/>
    <property type="match status" value="1"/>
</dbReference>
<dbReference type="PRINTS" id="PR00463">
    <property type="entry name" value="EP450I"/>
</dbReference>
<dbReference type="PRINTS" id="PR00385">
    <property type="entry name" value="P450"/>
</dbReference>
<dbReference type="SUPFAM" id="SSF48264">
    <property type="entry name" value="Cytochrome P450"/>
    <property type="match status" value="1"/>
</dbReference>
<protein>
    <recommendedName>
        <fullName evidence="4">Cytochrome P450 monooxygenase claW</fullName>
        <ecNumber evidence="6">1.-.-.-</ecNumber>
    </recommendedName>
    <alternativeName>
        <fullName evidence="4">Clavilactone A biosynthesis cluster protein W</fullName>
    </alternativeName>
</protein>
<evidence type="ECO:0000250" key="1">
    <source>
        <dbReference type="UniProtKB" id="P04798"/>
    </source>
</evidence>
<evidence type="ECO:0000255" key="2"/>
<evidence type="ECO:0000269" key="3">
    <source>
    </source>
</evidence>
<evidence type="ECO:0000303" key="4">
    <source>
    </source>
</evidence>
<evidence type="ECO:0000305" key="5"/>
<evidence type="ECO:0000305" key="6">
    <source>
    </source>
</evidence>
<accession>P9WEI2</accession>